<feature type="chain" id="PRO_0000325848" description="Ragulator complex protein LAMTOR4 homolog">
    <location>
        <begin position="1"/>
        <end position="87"/>
    </location>
</feature>
<comment type="function">
    <text evidence="1">Regulator of the TOR pathway, a signaling cascade that promotes cell growth in response to growth factors, energy levels, and amino acids. As part of the Ragulator complex, may activate the TOR signaling cascade in response to amino acids (By similarity).</text>
</comment>
<comment type="subunit">
    <text evidence="1">Part of the Ragulator complex.</text>
</comment>
<comment type="subcellular location">
    <subcellularLocation>
        <location evidence="1">Lysosome</location>
    </subcellularLocation>
</comment>
<comment type="similarity">
    <text evidence="2">Belongs to the LAMTOR4 family.</text>
</comment>
<reference key="1">
    <citation type="journal article" date="2005" name="Nature">
        <title>The genome of the social amoeba Dictyostelium discoideum.</title>
        <authorList>
            <person name="Eichinger L."/>
            <person name="Pachebat J.A."/>
            <person name="Gloeckner G."/>
            <person name="Rajandream M.A."/>
            <person name="Sucgang R."/>
            <person name="Berriman M."/>
            <person name="Song J."/>
            <person name="Olsen R."/>
            <person name="Szafranski K."/>
            <person name="Xu Q."/>
            <person name="Tunggal B."/>
            <person name="Kummerfeld S."/>
            <person name="Madera M."/>
            <person name="Konfortov B.A."/>
            <person name="Rivero F."/>
            <person name="Bankier A.T."/>
            <person name="Lehmann R."/>
            <person name="Hamlin N."/>
            <person name="Davies R."/>
            <person name="Gaudet P."/>
            <person name="Fey P."/>
            <person name="Pilcher K."/>
            <person name="Chen G."/>
            <person name="Saunders D."/>
            <person name="Sodergren E.J."/>
            <person name="Davis P."/>
            <person name="Kerhornou A."/>
            <person name="Nie X."/>
            <person name="Hall N."/>
            <person name="Anjard C."/>
            <person name="Hemphill L."/>
            <person name="Bason N."/>
            <person name="Farbrother P."/>
            <person name="Desany B."/>
            <person name="Just E."/>
            <person name="Morio T."/>
            <person name="Rost R."/>
            <person name="Churcher C.M."/>
            <person name="Cooper J."/>
            <person name="Haydock S."/>
            <person name="van Driessche N."/>
            <person name="Cronin A."/>
            <person name="Goodhead I."/>
            <person name="Muzny D.M."/>
            <person name="Mourier T."/>
            <person name="Pain A."/>
            <person name="Lu M."/>
            <person name="Harper D."/>
            <person name="Lindsay R."/>
            <person name="Hauser H."/>
            <person name="James K.D."/>
            <person name="Quiles M."/>
            <person name="Madan Babu M."/>
            <person name="Saito T."/>
            <person name="Buchrieser C."/>
            <person name="Wardroper A."/>
            <person name="Felder M."/>
            <person name="Thangavelu M."/>
            <person name="Johnson D."/>
            <person name="Knights A."/>
            <person name="Loulseged H."/>
            <person name="Mungall K.L."/>
            <person name="Oliver K."/>
            <person name="Price C."/>
            <person name="Quail M.A."/>
            <person name="Urushihara H."/>
            <person name="Hernandez J."/>
            <person name="Rabbinowitsch E."/>
            <person name="Steffen D."/>
            <person name="Sanders M."/>
            <person name="Ma J."/>
            <person name="Kohara Y."/>
            <person name="Sharp S."/>
            <person name="Simmonds M.N."/>
            <person name="Spiegler S."/>
            <person name="Tivey A."/>
            <person name="Sugano S."/>
            <person name="White B."/>
            <person name="Walker D."/>
            <person name="Woodward J.R."/>
            <person name="Winckler T."/>
            <person name="Tanaka Y."/>
            <person name="Shaulsky G."/>
            <person name="Schleicher M."/>
            <person name="Weinstock G.M."/>
            <person name="Rosenthal A."/>
            <person name="Cox E.C."/>
            <person name="Chisholm R.L."/>
            <person name="Gibbs R.A."/>
            <person name="Loomis W.F."/>
            <person name="Platzer M."/>
            <person name="Kay R.R."/>
            <person name="Williams J.G."/>
            <person name="Dear P.H."/>
            <person name="Noegel A.A."/>
            <person name="Barrell B.G."/>
            <person name="Kuspa A."/>
        </authorList>
    </citation>
    <scope>NUCLEOTIDE SEQUENCE [LARGE SCALE GENOMIC DNA]</scope>
    <source>
        <strain>AX4</strain>
    </source>
</reference>
<reference key="2">
    <citation type="journal article" date="2004" name="Nucleic Acids Res.">
        <title>Analyses of cDNAs from growth and slug stages of Dictyostelium discoideum.</title>
        <authorList>
            <person name="Urushihara H."/>
            <person name="Morio T."/>
            <person name="Saito T."/>
            <person name="Kohara Y."/>
            <person name="Koriki E."/>
            <person name="Ochiai H."/>
            <person name="Maeda M."/>
            <person name="Williams J.G."/>
            <person name="Takeuchi I."/>
            <person name="Tanaka Y."/>
        </authorList>
    </citation>
    <scope>NUCLEOTIDE SEQUENCE [LARGE SCALE MRNA]</scope>
    <source>
        <strain>AX4</strain>
    </source>
</reference>
<proteinExistence type="inferred from homology"/>
<accession>Q54DY3</accession>
<evidence type="ECO:0000250" key="1"/>
<evidence type="ECO:0000305" key="2"/>
<protein>
    <recommendedName>
        <fullName>Ragulator complex protein LAMTOR4 homolog</fullName>
    </recommendedName>
    <alternativeName>
        <fullName>Late endosomal/lysosomal adaptor and MAPK and MTOR activator 4</fullName>
    </alternativeName>
</protein>
<name>LTOR4_DICDI</name>
<sequence length="87" mass="9629">MSAPDILKDFKGSLTIEQDGSISSASGILQESFYNNKEFASTIISMLHDVNKITSSNNQEFKRMTVSFSEQTFIVTAIGTKIYVVVQ</sequence>
<gene>
    <name type="ORF">DDB_G0291948</name>
</gene>
<dbReference type="EMBL" id="AAFI02000186">
    <property type="protein sequence ID" value="EAL61504.1"/>
    <property type="molecule type" value="Genomic_DNA"/>
</dbReference>
<dbReference type="EMBL" id="AU266846">
    <property type="status" value="NOT_ANNOTATED_CDS"/>
    <property type="molecule type" value="mRNA"/>
</dbReference>
<dbReference type="RefSeq" id="XP_629913.1">
    <property type="nucleotide sequence ID" value="XM_629911.1"/>
</dbReference>
<dbReference type="SMR" id="Q54DY3"/>
<dbReference type="FunCoup" id="Q54DY3">
    <property type="interactions" value="2"/>
</dbReference>
<dbReference type="STRING" id="44689.Q54DY3"/>
<dbReference type="PaxDb" id="44689-DDB0215476"/>
<dbReference type="EnsemblProtists" id="EAL61504">
    <property type="protein sequence ID" value="EAL61504"/>
    <property type="gene ID" value="DDB_G0291948"/>
</dbReference>
<dbReference type="GeneID" id="8628414"/>
<dbReference type="KEGG" id="ddi:DDB_G0291948"/>
<dbReference type="dictyBase" id="DDB_G0291948"/>
<dbReference type="VEuPathDB" id="AmoebaDB:DDB_G0291948"/>
<dbReference type="eggNOG" id="ENOG502RIB0">
    <property type="taxonomic scope" value="Eukaryota"/>
</dbReference>
<dbReference type="HOGENOM" id="CLU_2488105_0_0_1"/>
<dbReference type="InParanoid" id="Q54DY3"/>
<dbReference type="OMA" id="KRMTITF"/>
<dbReference type="Reactome" id="R-DDI-1632852">
    <property type="pathway name" value="Macroautophagy"/>
</dbReference>
<dbReference type="Reactome" id="R-DDI-165159">
    <property type="pathway name" value="MTOR signalling"/>
</dbReference>
<dbReference type="Reactome" id="R-DDI-166208">
    <property type="pathway name" value="mTORC1-mediated signalling"/>
</dbReference>
<dbReference type="Reactome" id="R-DDI-380972">
    <property type="pathway name" value="Energy dependent regulation of mTOR by LKB1-AMPK"/>
</dbReference>
<dbReference type="Reactome" id="R-DDI-5628897">
    <property type="pathway name" value="TP53 Regulates Metabolic Genes"/>
</dbReference>
<dbReference type="Reactome" id="R-DDI-8943724">
    <property type="pathway name" value="Regulation of PTEN gene transcription"/>
</dbReference>
<dbReference type="Reactome" id="R-DDI-9639288">
    <property type="pathway name" value="Amino acids regulate mTORC1"/>
</dbReference>
<dbReference type="PRO" id="PR:Q54DY3"/>
<dbReference type="Proteomes" id="UP000002195">
    <property type="component" value="Chromosome 6"/>
</dbReference>
<dbReference type="GO" id="GO:0005764">
    <property type="term" value="C:lysosome"/>
    <property type="evidence" value="ECO:0000250"/>
    <property type="project" value="UniProtKB"/>
</dbReference>
<dbReference type="GO" id="GO:0071986">
    <property type="term" value="C:Ragulator complex"/>
    <property type="evidence" value="ECO:0000250"/>
    <property type="project" value="UniProtKB"/>
</dbReference>
<dbReference type="GO" id="GO:0071230">
    <property type="term" value="P:cellular response to amino acid stimulus"/>
    <property type="evidence" value="ECO:0000250"/>
    <property type="project" value="UniProtKB"/>
</dbReference>
<dbReference type="GO" id="GO:0032008">
    <property type="term" value="P:positive regulation of TOR signaling"/>
    <property type="evidence" value="ECO:0000250"/>
    <property type="project" value="UniProtKB"/>
</dbReference>
<dbReference type="GO" id="GO:0061462">
    <property type="term" value="P:protein localization to lysosome"/>
    <property type="evidence" value="ECO:0000250"/>
    <property type="project" value="UniProtKB"/>
</dbReference>
<dbReference type="GO" id="GO:0008361">
    <property type="term" value="P:regulation of cell size"/>
    <property type="evidence" value="ECO:0000250"/>
    <property type="project" value="UniProtKB"/>
</dbReference>
<dbReference type="InterPro" id="IPR034601">
    <property type="entry name" value="LAMTOR4"/>
</dbReference>
<dbReference type="PANTHER" id="PTHR33967">
    <property type="entry name" value="RAGULATOR COMPLEX PROTEIN LAMTOR4"/>
    <property type="match status" value="1"/>
</dbReference>
<dbReference type="PANTHER" id="PTHR33967:SF1">
    <property type="entry name" value="RAGULATOR COMPLEX PROTEIN LAMTOR4"/>
    <property type="match status" value="1"/>
</dbReference>
<organism>
    <name type="scientific">Dictyostelium discoideum</name>
    <name type="common">Social amoeba</name>
    <dbReference type="NCBI Taxonomy" id="44689"/>
    <lineage>
        <taxon>Eukaryota</taxon>
        <taxon>Amoebozoa</taxon>
        <taxon>Evosea</taxon>
        <taxon>Eumycetozoa</taxon>
        <taxon>Dictyostelia</taxon>
        <taxon>Dictyosteliales</taxon>
        <taxon>Dictyosteliaceae</taxon>
        <taxon>Dictyostelium</taxon>
    </lineage>
</organism>
<keyword id="KW-0458">Lysosome</keyword>
<keyword id="KW-1185">Reference proteome</keyword>